<reference key="1">
    <citation type="journal article" date="1997" name="Gene">
        <title>Analysis of four tylosin biosynthetic genes from the tylLM region of Streptomyces fradiae.</title>
        <authorList>
            <person name="Gandecha A.R."/>
            <person name="Large S.L."/>
            <person name="Cundliffe E."/>
        </authorList>
    </citation>
    <scope>NUCLEOTIDE SEQUENCE [GENOMIC DNA]</scope>
    <scope>FUNCTION</scope>
    <scope>PATHWAY</scope>
    <source>
        <strain>T59235</strain>
    </source>
</reference>
<reference key="2">
    <citation type="submission" date="1999-06" db="EMBL/GenBank/DDBJ databases">
        <authorList>
            <person name="Gandecha A.R."/>
        </authorList>
    </citation>
    <scope>NUCLEOTIDE SEQUENCE [GENOMIC DNA]</scope>
    <source>
        <strain>T59235</strain>
    </source>
</reference>
<reference key="3">
    <citation type="journal article" date="2004" name="J. Am. Chem. Soc.">
        <title>Characterization of tylM3/tylM2 and mydC/mycB pairs required for efficient glycosyltransfer in macrolide antibiotic biosynthesis.</title>
        <authorList>
            <person name="Melancon C.E. III"/>
            <person name="Takahashi H."/>
            <person name="Liu H.W."/>
        </authorList>
    </citation>
    <scope>FUNCTION</scope>
    <scope>CATALYTIC ACTIVITY</scope>
    <scope>ACTIVITY REGULATION</scope>
    <scope>SUBSTRATE SPECIFICITY</scope>
</reference>
<organism>
    <name type="scientific">Streptomyces fradiae</name>
    <name type="common">Streptomyces roseoflavus</name>
    <dbReference type="NCBI Taxonomy" id="1906"/>
    <lineage>
        <taxon>Bacteria</taxon>
        <taxon>Bacillati</taxon>
        <taxon>Actinomycetota</taxon>
        <taxon>Actinomycetes</taxon>
        <taxon>Kitasatosporales</taxon>
        <taxon>Streptomycetaceae</taxon>
        <taxon>Streptomyces</taxon>
    </lineage>
</organism>
<dbReference type="EC" id="2.4.1.316" evidence="2"/>
<dbReference type="EMBL" id="X81885">
    <property type="protein sequence ID" value="CAA57472.2"/>
    <property type="molecule type" value="Genomic_DNA"/>
</dbReference>
<dbReference type="SMR" id="P95747"/>
<dbReference type="STRING" id="1906.SFRA_32295"/>
<dbReference type="CAZy" id="GT1">
    <property type="family name" value="Glycosyltransferase Family 1"/>
</dbReference>
<dbReference type="KEGG" id="ag:CAA57472"/>
<dbReference type="eggNOG" id="COG1819">
    <property type="taxonomic scope" value="Bacteria"/>
</dbReference>
<dbReference type="BioCyc" id="MetaCyc:MONOMER-18380"/>
<dbReference type="BRENDA" id="2.4.1.316">
    <property type="organism ID" value="5932"/>
</dbReference>
<dbReference type="UniPathway" id="UPA01018"/>
<dbReference type="GO" id="GO:0016758">
    <property type="term" value="F:hexosyltransferase activity"/>
    <property type="evidence" value="ECO:0007669"/>
    <property type="project" value="UniProtKB-ARBA"/>
</dbReference>
<dbReference type="GO" id="GO:0008194">
    <property type="term" value="F:UDP-glycosyltransferase activity"/>
    <property type="evidence" value="ECO:0007669"/>
    <property type="project" value="InterPro"/>
</dbReference>
<dbReference type="GO" id="GO:0017000">
    <property type="term" value="P:antibiotic biosynthetic process"/>
    <property type="evidence" value="ECO:0007669"/>
    <property type="project" value="UniProtKB-KW"/>
</dbReference>
<dbReference type="CDD" id="cd03784">
    <property type="entry name" value="GT1_Gtf-like"/>
    <property type="match status" value="1"/>
</dbReference>
<dbReference type="FunFam" id="3.40.50.2000:FF:000072">
    <property type="entry name" value="Glycosyl transferase"/>
    <property type="match status" value="1"/>
</dbReference>
<dbReference type="Gene3D" id="3.40.50.2000">
    <property type="entry name" value="Glycogen Phosphorylase B"/>
    <property type="match status" value="2"/>
</dbReference>
<dbReference type="InterPro" id="IPR010610">
    <property type="entry name" value="EryCIII-like_C"/>
</dbReference>
<dbReference type="InterPro" id="IPR048284">
    <property type="entry name" value="EryCIII-like_N"/>
</dbReference>
<dbReference type="InterPro" id="IPR030953">
    <property type="entry name" value="Glycosyl_450act"/>
</dbReference>
<dbReference type="InterPro" id="IPR050426">
    <property type="entry name" value="Glycosyltransferase_28"/>
</dbReference>
<dbReference type="InterPro" id="IPR002213">
    <property type="entry name" value="UDP_glucos_trans"/>
</dbReference>
<dbReference type="NCBIfam" id="TIGR04516">
    <property type="entry name" value="glycosyl_450act"/>
    <property type="match status" value="1"/>
</dbReference>
<dbReference type="PANTHER" id="PTHR48050">
    <property type="entry name" value="STEROL 3-BETA-GLUCOSYLTRANSFERASE"/>
    <property type="match status" value="1"/>
</dbReference>
<dbReference type="PANTHER" id="PTHR48050:SF13">
    <property type="entry name" value="STEROL 3-BETA-GLUCOSYLTRANSFERASE UGT80A2"/>
    <property type="match status" value="1"/>
</dbReference>
<dbReference type="Pfam" id="PF06722">
    <property type="entry name" value="EryCIII-like_C"/>
    <property type="match status" value="1"/>
</dbReference>
<dbReference type="Pfam" id="PF21036">
    <property type="entry name" value="EryCIII-like_N"/>
    <property type="match status" value="1"/>
</dbReference>
<dbReference type="SUPFAM" id="SSF53756">
    <property type="entry name" value="UDP-Glycosyltransferase/glycogen phosphorylase"/>
    <property type="match status" value="1"/>
</dbReference>
<sequence>MRRALDDRRRGPHGPEGKPPMRVLLTCIAHNTHYYNLVPVAWALRAAGHEVRVAAQPALTDTITASGLTAVPVGGNESVLEFVTEIGGDPGPYQRGMDFAETCGEPLSYEHALGQQTAMSALCFAPFNCDSTIDDMVALARSWRPDLVLWEPFTYAGPIAAHACGAAHARLLWGPDVILNARAQFRRLAAGQPEERREDPVAEWLGWTLERHGLTAERETVEELIGGQWTLDPTAESLRLPAAGRVVPFRFVPYNGRSVLPDWLLRKPGRPRVCFTLGVSARETYGRDAVPFHELLAGLGDLDAEIVATLDPGQLSGAGEVPRNVRAVDFVPMDALLPTCSAVVHHGGAGTCFTATLNGLPQIVVAALWDAPLKGAQLAEAGAGVSIAPEKLDAATLRAGVVRALEDEDMRRSAGLLRAEMLAEPTPAGLVPQLERLTALHRNGRSRSAPER</sequence>
<protein>
    <recommendedName>
        <fullName evidence="3">Tylactone mycaminosyltransferase</fullName>
        <ecNumber evidence="2">2.4.1.316</ecNumber>
    </recommendedName>
</protein>
<gene>
    <name evidence="4" type="primary">tylMII</name>
</gene>
<evidence type="ECO:0000256" key="1">
    <source>
        <dbReference type="SAM" id="MobiDB-lite"/>
    </source>
</evidence>
<evidence type="ECO:0000269" key="2">
    <source>
    </source>
</evidence>
<evidence type="ECO:0000303" key="3">
    <source>
    </source>
</evidence>
<evidence type="ECO:0000303" key="4">
    <source>
    </source>
</evidence>
<evidence type="ECO:0000305" key="5"/>
<comment type="function">
    <text evidence="2 4">Involved in the biosynthesis of the macrolide antibiotic tylosin derived from the polyketide lactone tylactone. Catalyzes the transfer of alpha-D-mycaminosyl from dTDP-alpha-D-mycaminose to the 5-hydroxyl group of tylactone to yield 5-O-mycaminosytylactone. It can also accept 16-membered tylactone and 12-membered ring macrolide.</text>
</comment>
<comment type="catalytic activity">
    <reaction evidence="2">
        <text>tylactone + dTDP-alpha-D-mycaminose = 5-O-beta-D-mycaminosyltylactone + dTDP + H(+)</text>
        <dbReference type="Rhea" id="RHEA:21468"/>
        <dbReference type="ChEBI" id="CHEBI:15378"/>
        <dbReference type="ChEBI" id="CHEBI:29700"/>
        <dbReference type="ChEBI" id="CHEBI:58369"/>
        <dbReference type="ChEBI" id="CHEBI:63268"/>
        <dbReference type="ChEBI" id="CHEBI:76802"/>
        <dbReference type="EC" id="2.4.1.316"/>
    </reaction>
</comment>
<comment type="activity regulation">
    <text evidence="2">The activity of TylM2 is substantially increased by the addition of the accessory protein TylM3.</text>
</comment>
<comment type="pathway">
    <text evidence="4">Antibiotic biosynthesis; tylosin biosynthesis.</text>
</comment>
<comment type="similarity">
    <text evidence="5">Belongs to the glycosyltransferase 28 family.</text>
</comment>
<accession>P95747</accession>
<proteinExistence type="evidence at protein level"/>
<keyword id="KW-0045">Antibiotic biosynthesis</keyword>
<keyword id="KW-0328">Glycosyltransferase</keyword>
<keyword id="KW-0808">Transferase</keyword>
<name>TYLM2_STRFR</name>
<feature type="chain" id="PRO_0000430767" description="Tylactone mycaminosyltransferase">
    <location>
        <begin position="1"/>
        <end position="452"/>
    </location>
</feature>
<feature type="region of interest" description="Disordered" evidence="1">
    <location>
        <begin position="1"/>
        <end position="20"/>
    </location>
</feature>
<feature type="compositionally biased region" description="Basic and acidic residues" evidence="1">
    <location>
        <begin position="1"/>
        <end position="16"/>
    </location>
</feature>